<name>GLPK_AGARV</name>
<reference key="1">
    <citation type="journal article" date="2009" name="Proc. Natl. Acad. Sci. U.S.A.">
        <title>Characterizing a model human gut microbiota composed of members of its two dominant bacterial phyla.</title>
        <authorList>
            <person name="Mahowald M.A."/>
            <person name="Rey F.E."/>
            <person name="Seedorf H."/>
            <person name="Turnbaugh P.J."/>
            <person name="Fulton R.S."/>
            <person name="Wollam A."/>
            <person name="Shah N."/>
            <person name="Wang C."/>
            <person name="Magrini V."/>
            <person name="Wilson R.K."/>
            <person name="Cantarel B.L."/>
            <person name="Coutinho P.M."/>
            <person name="Henrissat B."/>
            <person name="Crock L.W."/>
            <person name="Russell A."/>
            <person name="Verberkmoes N.C."/>
            <person name="Hettich R.L."/>
            <person name="Gordon J.I."/>
        </authorList>
    </citation>
    <scope>NUCLEOTIDE SEQUENCE [LARGE SCALE GENOMIC DNA]</scope>
    <source>
        <strain>ATCC 33656 / DSM 3377 / JCM 17463 / KCTC 5835 / LMG 30912 / VPI 0990</strain>
    </source>
</reference>
<dbReference type="EC" id="2.7.1.30" evidence="1"/>
<dbReference type="EMBL" id="CP001107">
    <property type="protein sequence ID" value="ACR76320.1"/>
    <property type="molecule type" value="Genomic_DNA"/>
</dbReference>
<dbReference type="RefSeq" id="WP_012743409.1">
    <property type="nucleotide sequence ID" value="NC_012781.1"/>
</dbReference>
<dbReference type="SMR" id="C4ZGB4"/>
<dbReference type="STRING" id="515619.EUBREC_2589"/>
<dbReference type="PaxDb" id="515619-EUBREC_2589"/>
<dbReference type="GeneID" id="86989325"/>
<dbReference type="KEGG" id="ere:EUBREC_2589"/>
<dbReference type="HOGENOM" id="CLU_009281_2_3_9"/>
<dbReference type="UniPathway" id="UPA00618">
    <property type="reaction ID" value="UER00672"/>
</dbReference>
<dbReference type="Proteomes" id="UP000001477">
    <property type="component" value="Chromosome"/>
</dbReference>
<dbReference type="GO" id="GO:0005829">
    <property type="term" value="C:cytosol"/>
    <property type="evidence" value="ECO:0007669"/>
    <property type="project" value="TreeGrafter"/>
</dbReference>
<dbReference type="GO" id="GO:0005524">
    <property type="term" value="F:ATP binding"/>
    <property type="evidence" value="ECO:0007669"/>
    <property type="project" value="UniProtKB-UniRule"/>
</dbReference>
<dbReference type="GO" id="GO:0004370">
    <property type="term" value="F:glycerol kinase activity"/>
    <property type="evidence" value="ECO:0000250"/>
    <property type="project" value="UniProtKB"/>
</dbReference>
<dbReference type="GO" id="GO:0019563">
    <property type="term" value="P:glycerol catabolic process"/>
    <property type="evidence" value="ECO:0007669"/>
    <property type="project" value="UniProtKB-UniRule"/>
</dbReference>
<dbReference type="GO" id="GO:0006071">
    <property type="term" value="P:glycerol metabolic process"/>
    <property type="evidence" value="ECO:0000250"/>
    <property type="project" value="UniProtKB"/>
</dbReference>
<dbReference type="GO" id="GO:0006072">
    <property type="term" value="P:glycerol-3-phosphate metabolic process"/>
    <property type="evidence" value="ECO:0007669"/>
    <property type="project" value="InterPro"/>
</dbReference>
<dbReference type="CDD" id="cd07769">
    <property type="entry name" value="ASKHA_NBD_FGGY_GK"/>
    <property type="match status" value="1"/>
</dbReference>
<dbReference type="FunFam" id="3.30.420.40:FF:000007">
    <property type="entry name" value="Glycerol kinase"/>
    <property type="match status" value="1"/>
</dbReference>
<dbReference type="FunFam" id="3.30.420.40:FF:000008">
    <property type="entry name" value="Glycerol kinase"/>
    <property type="match status" value="1"/>
</dbReference>
<dbReference type="Gene3D" id="3.30.420.40">
    <property type="match status" value="2"/>
</dbReference>
<dbReference type="HAMAP" id="MF_00186">
    <property type="entry name" value="Glycerol_kin"/>
    <property type="match status" value="1"/>
</dbReference>
<dbReference type="InterPro" id="IPR043129">
    <property type="entry name" value="ATPase_NBD"/>
</dbReference>
<dbReference type="InterPro" id="IPR000577">
    <property type="entry name" value="Carb_kinase_FGGY"/>
</dbReference>
<dbReference type="InterPro" id="IPR018483">
    <property type="entry name" value="Carb_kinase_FGGY_CS"/>
</dbReference>
<dbReference type="InterPro" id="IPR018485">
    <property type="entry name" value="FGGY_C"/>
</dbReference>
<dbReference type="InterPro" id="IPR018484">
    <property type="entry name" value="FGGY_N"/>
</dbReference>
<dbReference type="InterPro" id="IPR005999">
    <property type="entry name" value="Glycerol_kin"/>
</dbReference>
<dbReference type="NCBIfam" id="TIGR01311">
    <property type="entry name" value="glycerol_kin"/>
    <property type="match status" value="1"/>
</dbReference>
<dbReference type="NCBIfam" id="NF000756">
    <property type="entry name" value="PRK00047.1"/>
    <property type="match status" value="1"/>
</dbReference>
<dbReference type="PANTHER" id="PTHR10196:SF69">
    <property type="entry name" value="GLYCEROL KINASE"/>
    <property type="match status" value="1"/>
</dbReference>
<dbReference type="PANTHER" id="PTHR10196">
    <property type="entry name" value="SUGAR KINASE"/>
    <property type="match status" value="1"/>
</dbReference>
<dbReference type="Pfam" id="PF02782">
    <property type="entry name" value="FGGY_C"/>
    <property type="match status" value="1"/>
</dbReference>
<dbReference type="Pfam" id="PF00370">
    <property type="entry name" value="FGGY_N"/>
    <property type="match status" value="1"/>
</dbReference>
<dbReference type="PIRSF" id="PIRSF000538">
    <property type="entry name" value="GlpK"/>
    <property type="match status" value="1"/>
</dbReference>
<dbReference type="SUPFAM" id="SSF53067">
    <property type="entry name" value="Actin-like ATPase domain"/>
    <property type="match status" value="2"/>
</dbReference>
<dbReference type="PROSITE" id="PS00933">
    <property type="entry name" value="FGGY_KINASES_1"/>
    <property type="match status" value="1"/>
</dbReference>
<dbReference type="PROSITE" id="PS00445">
    <property type="entry name" value="FGGY_KINASES_2"/>
    <property type="match status" value="1"/>
</dbReference>
<accession>C4ZGB4</accession>
<sequence length="498" mass="55214">MAKYIMALDAGTTSNRCILFNEKGEMCSVAQKEFTQFFPKPGWVEHDAEEIWATQLEVAKEAMANIQATAADICAIGITNQRETTIVWDKNTGEPVYHAIVWQCRRTAEYADSLKEKGLTETFRKKTGLVIDAYFSATKLKWLLDNVPGARERAERGELLFGTVETWLIWKLTQGQVHVTDYSNASRTMMFNINTLKWDDEILKELDIPKSMLPKPMPSSCVYGEVNPVYFGGPIPIAGAAGDQQAALFGQTCFRAGEAKNTYGTGCFLLMNTGEMPVSSKNGLVTTIAWGIDGKVVYALEGSIFVAGASIQWLRDEMKFIDSSTDSEYMARKVKDTNGCYVVPAFTGLGAPYWDQYARGTIVGLTRGVNKYHVIRATLESMAFQVNDVLEAMKADSGINLTSLKVDGGASANNLLMQMQADISNAPVNRPVCVETTAMGAAYLAGLAVGYWDSMDDIKRNWAIDRVFEPEIADDMREKKRKMWKKAVACAFNWAKDD</sequence>
<keyword id="KW-0067">ATP-binding</keyword>
<keyword id="KW-0319">Glycerol metabolism</keyword>
<keyword id="KW-0418">Kinase</keyword>
<keyword id="KW-0547">Nucleotide-binding</keyword>
<keyword id="KW-0808">Transferase</keyword>
<gene>
    <name evidence="1" type="primary">glpK</name>
    <name type="ordered locus">EUBREC_2589</name>
</gene>
<comment type="function">
    <text evidence="1">Key enzyme in the regulation of glycerol uptake and metabolism. Catalyzes the phosphorylation of glycerol to yield sn-glycerol 3-phosphate.</text>
</comment>
<comment type="catalytic activity">
    <reaction evidence="1">
        <text>glycerol + ATP = sn-glycerol 3-phosphate + ADP + H(+)</text>
        <dbReference type="Rhea" id="RHEA:21644"/>
        <dbReference type="ChEBI" id="CHEBI:15378"/>
        <dbReference type="ChEBI" id="CHEBI:17754"/>
        <dbReference type="ChEBI" id="CHEBI:30616"/>
        <dbReference type="ChEBI" id="CHEBI:57597"/>
        <dbReference type="ChEBI" id="CHEBI:456216"/>
        <dbReference type="EC" id="2.7.1.30"/>
    </reaction>
</comment>
<comment type="activity regulation">
    <text evidence="1">Activated by phosphorylation and inhibited by fructose 1,6-bisphosphate (FBP).</text>
</comment>
<comment type="pathway">
    <text evidence="1">Polyol metabolism; glycerol degradation via glycerol kinase pathway; sn-glycerol 3-phosphate from glycerol: step 1/1.</text>
</comment>
<comment type="subunit">
    <text evidence="1">Homotetramer and homodimer (in equilibrium).</text>
</comment>
<comment type="similarity">
    <text evidence="1">Belongs to the FGGY kinase family.</text>
</comment>
<protein>
    <recommendedName>
        <fullName evidence="1">Glycerol kinase</fullName>
        <ecNumber evidence="1">2.7.1.30</ecNumber>
    </recommendedName>
    <alternativeName>
        <fullName evidence="1">ATP:glycerol 3-phosphotransferase</fullName>
    </alternativeName>
    <alternativeName>
        <fullName evidence="1">Glycerokinase</fullName>
        <shortName evidence="1">GK</shortName>
    </alternativeName>
</protein>
<feature type="chain" id="PRO_1000203953" description="Glycerol kinase">
    <location>
        <begin position="1"/>
        <end position="498"/>
    </location>
</feature>
<feature type="binding site" evidence="1">
    <location>
        <position position="12"/>
    </location>
    <ligand>
        <name>ADP</name>
        <dbReference type="ChEBI" id="CHEBI:456216"/>
    </ligand>
</feature>
<feature type="binding site" evidence="1">
    <location>
        <position position="12"/>
    </location>
    <ligand>
        <name>ATP</name>
        <dbReference type="ChEBI" id="CHEBI:30616"/>
    </ligand>
</feature>
<feature type="binding site" evidence="1">
    <location>
        <position position="12"/>
    </location>
    <ligand>
        <name>sn-glycerol 3-phosphate</name>
        <dbReference type="ChEBI" id="CHEBI:57597"/>
    </ligand>
</feature>
<feature type="binding site" evidence="1">
    <location>
        <position position="13"/>
    </location>
    <ligand>
        <name>ATP</name>
        <dbReference type="ChEBI" id="CHEBI:30616"/>
    </ligand>
</feature>
<feature type="binding site" evidence="1">
    <location>
        <position position="14"/>
    </location>
    <ligand>
        <name>ATP</name>
        <dbReference type="ChEBI" id="CHEBI:30616"/>
    </ligand>
</feature>
<feature type="binding site" evidence="1">
    <location>
        <position position="16"/>
    </location>
    <ligand>
        <name>ADP</name>
        <dbReference type="ChEBI" id="CHEBI:456216"/>
    </ligand>
</feature>
<feature type="binding site" evidence="1">
    <location>
        <position position="82"/>
    </location>
    <ligand>
        <name>glycerol</name>
        <dbReference type="ChEBI" id="CHEBI:17754"/>
    </ligand>
</feature>
<feature type="binding site" evidence="1">
    <location>
        <position position="82"/>
    </location>
    <ligand>
        <name>sn-glycerol 3-phosphate</name>
        <dbReference type="ChEBI" id="CHEBI:57597"/>
    </ligand>
</feature>
<feature type="binding site" evidence="1">
    <location>
        <position position="83"/>
    </location>
    <ligand>
        <name>glycerol</name>
        <dbReference type="ChEBI" id="CHEBI:17754"/>
    </ligand>
</feature>
<feature type="binding site" evidence="1">
    <location>
        <position position="83"/>
    </location>
    <ligand>
        <name>sn-glycerol 3-phosphate</name>
        <dbReference type="ChEBI" id="CHEBI:57597"/>
    </ligand>
</feature>
<feature type="binding site" evidence="1">
    <location>
        <position position="134"/>
    </location>
    <ligand>
        <name>glycerol</name>
        <dbReference type="ChEBI" id="CHEBI:17754"/>
    </ligand>
</feature>
<feature type="binding site" evidence="1">
    <location>
        <position position="134"/>
    </location>
    <ligand>
        <name>sn-glycerol 3-phosphate</name>
        <dbReference type="ChEBI" id="CHEBI:57597"/>
    </ligand>
</feature>
<feature type="binding site" evidence="1">
    <location>
        <position position="243"/>
    </location>
    <ligand>
        <name>glycerol</name>
        <dbReference type="ChEBI" id="CHEBI:17754"/>
    </ligand>
</feature>
<feature type="binding site" evidence="1">
    <location>
        <position position="243"/>
    </location>
    <ligand>
        <name>sn-glycerol 3-phosphate</name>
        <dbReference type="ChEBI" id="CHEBI:57597"/>
    </ligand>
</feature>
<feature type="binding site" evidence="1">
    <location>
        <position position="244"/>
    </location>
    <ligand>
        <name>glycerol</name>
        <dbReference type="ChEBI" id="CHEBI:17754"/>
    </ligand>
</feature>
<feature type="binding site" evidence="1">
    <location>
        <position position="265"/>
    </location>
    <ligand>
        <name>ADP</name>
        <dbReference type="ChEBI" id="CHEBI:456216"/>
    </ligand>
</feature>
<feature type="binding site" evidence="1">
    <location>
        <position position="265"/>
    </location>
    <ligand>
        <name>ATP</name>
        <dbReference type="ChEBI" id="CHEBI:30616"/>
    </ligand>
</feature>
<feature type="binding site" evidence="1">
    <location>
        <position position="308"/>
    </location>
    <ligand>
        <name>ADP</name>
        <dbReference type="ChEBI" id="CHEBI:456216"/>
    </ligand>
</feature>
<feature type="binding site" evidence="1">
    <location>
        <position position="308"/>
    </location>
    <ligand>
        <name>ATP</name>
        <dbReference type="ChEBI" id="CHEBI:30616"/>
    </ligand>
</feature>
<feature type="binding site" evidence="1">
    <location>
        <position position="312"/>
    </location>
    <ligand>
        <name>ATP</name>
        <dbReference type="ChEBI" id="CHEBI:30616"/>
    </ligand>
</feature>
<feature type="binding site" evidence="1">
    <location>
        <position position="409"/>
    </location>
    <ligand>
        <name>ADP</name>
        <dbReference type="ChEBI" id="CHEBI:456216"/>
    </ligand>
</feature>
<feature type="binding site" evidence="1">
    <location>
        <position position="409"/>
    </location>
    <ligand>
        <name>ATP</name>
        <dbReference type="ChEBI" id="CHEBI:30616"/>
    </ligand>
</feature>
<feature type="binding site" evidence="1">
    <location>
        <position position="413"/>
    </location>
    <ligand>
        <name>ADP</name>
        <dbReference type="ChEBI" id="CHEBI:456216"/>
    </ligand>
</feature>
<organism>
    <name type="scientific">Agathobacter rectalis (strain ATCC 33656 / DSM 3377 / JCM 17463 / KCTC 5835 / VPI 0990)</name>
    <name type="common">Eubacterium rectale</name>
    <dbReference type="NCBI Taxonomy" id="515619"/>
    <lineage>
        <taxon>Bacteria</taxon>
        <taxon>Bacillati</taxon>
        <taxon>Bacillota</taxon>
        <taxon>Clostridia</taxon>
        <taxon>Lachnospirales</taxon>
        <taxon>Lachnospiraceae</taxon>
        <taxon>Agathobacter</taxon>
    </lineage>
</organism>
<evidence type="ECO:0000255" key="1">
    <source>
        <dbReference type="HAMAP-Rule" id="MF_00186"/>
    </source>
</evidence>
<proteinExistence type="inferred from homology"/>